<name>DEOC_MICLC</name>
<comment type="function">
    <text evidence="1">Catalyzes a reversible aldol reaction between acetaldehyde and D-glyceraldehyde 3-phosphate to generate 2-deoxy-D-ribose 5-phosphate.</text>
</comment>
<comment type="catalytic activity">
    <reaction evidence="1">
        <text>2-deoxy-D-ribose 5-phosphate = D-glyceraldehyde 3-phosphate + acetaldehyde</text>
        <dbReference type="Rhea" id="RHEA:12821"/>
        <dbReference type="ChEBI" id="CHEBI:15343"/>
        <dbReference type="ChEBI" id="CHEBI:59776"/>
        <dbReference type="ChEBI" id="CHEBI:62877"/>
        <dbReference type="EC" id="4.1.2.4"/>
    </reaction>
</comment>
<comment type="pathway">
    <text evidence="1">Carbohydrate degradation; 2-deoxy-D-ribose 1-phosphate degradation; D-glyceraldehyde 3-phosphate and acetaldehyde from 2-deoxy-alpha-D-ribose 1-phosphate: step 2/2.</text>
</comment>
<comment type="subcellular location">
    <subcellularLocation>
        <location evidence="1">Cytoplasm</location>
    </subcellularLocation>
</comment>
<comment type="similarity">
    <text evidence="1">Belongs to the DeoC/FbaB aldolase family. DeoC type 1 subfamily.</text>
</comment>
<proteinExistence type="inferred from homology"/>
<protein>
    <recommendedName>
        <fullName evidence="1">Deoxyribose-phosphate aldolase</fullName>
        <shortName evidence="1">DERA</shortName>
        <ecNumber evidence="1">4.1.2.4</ecNumber>
    </recommendedName>
    <alternativeName>
        <fullName evidence="1">2-deoxy-D-ribose 5-phosphate aldolase</fullName>
    </alternativeName>
    <alternativeName>
        <fullName evidence="1">Phosphodeoxyriboaldolase</fullName>
        <shortName evidence="1">Deoxyriboaldolase</shortName>
    </alternativeName>
</protein>
<sequence length="229" mass="23179">MTVSLTTAELAKYIDATALKADTSEADVRRLVAESREAGVKSVCINPVWVPLVAAELADSDVLTCTVIGFPLGANTSEVKAFEARQAIDAGADEVDMVIDVAAARAGDRARLVSDVRAVAEAAHADGPAGDGGALLKVIVETALLDDDAIVLACEAAVEAGADFVKTSTGFSTAGATVEHVALMRRTVGEGIGVKASGGVRTREDALAMIEAGATRIGASSALAILGSD</sequence>
<reference key="1">
    <citation type="journal article" date="2010" name="J. Bacteriol.">
        <title>Genome sequence of the Fleming strain of Micrococcus luteus, a simple free-living actinobacterium.</title>
        <authorList>
            <person name="Young M."/>
            <person name="Artsatbanov V."/>
            <person name="Beller H.R."/>
            <person name="Chandra G."/>
            <person name="Chater K.F."/>
            <person name="Dover L.G."/>
            <person name="Goh E.B."/>
            <person name="Kahan T."/>
            <person name="Kaprelyants A.S."/>
            <person name="Kyrpides N."/>
            <person name="Lapidus A."/>
            <person name="Lowry S.R."/>
            <person name="Lykidis A."/>
            <person name="Mahillon J."/>
            <person name="Markowitz V."/>
            <person name="Mavromatis K."/>
            <person name="Mukamolova G.V."/>
            <person name="Oren A."/>
            <person name="Rokem J.S."/>
            <person name="Smith M.C."/>
            <person name="Young D.I."/>
            <person name="Greenblatt C.L."/>
        </authorList>
    </citation>
    <scope>NUCLEOTIDE SEQUENCE [LARGE SCALE GENOMIC DNA]</scope>
    <source>
        <strain>ATCC 4698 / DSM 20030 / JCM 1464 / CCM 169 / CCUG 5858 / IAM 1056 / NBRC 3333 / NCIMB 9278 / NCTC 2665 / VKM Ac-2230</strain>
    </source>
</reference>
<dbReference type="EC" id="4.1.2.4" evidence="1"/>
<dbReference type="EMBL" id="CP001628">
    <property type="protein sequence ID" value="ACS30097.1"/>
    <property type="molecule type" value="Genomic_DNA"/>
</dbReference>
<dbReference type="RefSeq" id="WP_010079274.1">
    <property type="nucleotide sequence ID" value="NC_012803.1"/>
</dbReference>
<dbReference type="SMR" id="C5C9E5"/>
<dbReference type="STRING" id="465515.Mlut_05590"/>
<dbReference type="EnsemblBacteria" id="ACS30097">
    <property type="protein sequence ID" value="ACS30097"/>
    <property type="gene ID" value="Mlut_05590"/>
</dbReference>
<dbReference type="GeneID" id="93344734"/>
<dbReference type="KEGG" id="mlu:Mlut_05590"/>
<dbReference type="PATRIC" id="fig|465515.4.peg.529"/>
<dbReference type="eggNOG" id="COG0274">
    <property type="taxonomic scope" value="Bacteria"/>
</dbReference>
<dbReference type="HOGENOM" id="CLU_053595_0_2_11"/>
<dbReference type="UniPathway" id="UPA00002">
    <property type="reaction ID" value="UER00468"/>
</dbReference>
<dbReference type="Proteomes" id="UP000000738">
    <property type="component" value="Chromosome"/>
</dbReference>
<dbReference type="GO" id="GO:0005737">
    <property type="term" value="C:cytoplasm"/>
    <property type="evidence" value="ECO:0007669"/>
    <property type="project" value="UniProtKB-SubCell"/>
</dbReference>
<dbReference type="GO" id="GO:0004139">
    <property type="term" value="F:deoxyribose-phosphate aldolase activity"/>
    <property type="evidence" value="ECO:0007669"/>
    <property type="project" value="UniProtKB-UniRule"/>
</dbReference>
<dbReference type="GO" id="GO:0006018">
    <property type="term" value="P:2-deoxyribose 1-phosphate catabolic process"/>
    <property type="evidence" value="ECO:0007669"/>
    <property type="project" value="UniProtKB-UniRule"/>
</dbReference>
<dbReference type="GO" id="GO:0016052">
    <property type="term" value="P:carbohydrate catabolic process"/>
    <property type="evidence" value="ECO:0007669"/>
    <property type="project" value="TreeGrafter"/>
</dbReference>
<dbReference type="GO" id="GO:0009264">
    <property type="term" value="P:deoxyribonucleotide catabolic process"/>
    <property type="evidence" value="ECO:0007669"/>
    <property type="project" value="InterPro"/>
</dbReference>
<dbReference type="CDD" id="cd00959">
    <property type="entry name" value="DeoC"/>
    <property type="match status" value="1"/>
</dbReference>
<dbReference type="FunFam" id="3.20.20.70:FF:000044">
    <property type="entry name" value="Deoxyribose-phosphate aldolase"/>
    <property type="match status" value="1"/>
</dbReference>
<dbReference type="Gene3D" id="3.20.20.70">
    <property type="entry name" value="Aldolase class I"/>
    <property type="match status" value="1"/>
</dbReference>
<dbReference type="HAMAP" id="MF_00114">
    <property type="entry name" value="DeoC_type1"/>
    <property type="match status" value="1"/>
</dbReference>
<dbReference type="InterPro" id="IPR013785">
    <property type="entry name" value="Aldolase_TIM"/>
</dbReference>
<dbReference type="InterPro" id="IPR011343">
    <property type="entry name" value="DeoC"/>
</dbReference>
<dbReference type="InterPro" id="IPR002915">
    <property type="entry name" value="DeoC/FbaB/LacD_aldolase"/>
</dbReference>
<dbReference type="InterPro" id="IPR028581">
    <property type="entry name" value="DeoC_typeI"/>
</dbReference>
<dbReference type="NCBIfam" id="TIGR00126">
    <property type="entry name" value="deoC"/>
    <property type="match status" value="1"/>
</dbReference>
<dbReference type="PANTHER" id="PTHR10889">
    <property type="entry name" value="DEOXYRIBOSE-PHOSPHATE ALDOLASE"/>
    <property type="match status" value="1"/>
</dbReference>
<dbReference type="PANTHER" id="PTHR10889:SF1">
    <property type="entry name" value="DEOXYRIBOSE-PHOSPHATE ALDOLASE"/>
    <property type="match status" value="1"/>
</dbReference>
<dbReference type="Pfam" id="PF01791">
    <property type="entry name" value="DeoC"/>
    <property type="match status" value="1"/>
</dbReference>
<dbReference type="PIRSF" id="PIRSF001357">
    <property type="entry name" value="DeoC"/>
    <property type="match status" value="1"/>
</dbReference>
<dbReference type="SMART" id="SM01133">
    <property type="entry name" value="DeoC"/>
    <property type="match status" value="1"/>
</dbReference>
<dbReference type="SUPFAM" id="SSF51569">
    <property type="entry name" value="Aldolase"/>
    <property type="match status" value="1"/>
</dbReference>
<feature type="chain" id="PRO_1000202968" description="Deoxyribose-phosphate aldolase">
    <location>
        <begin position="1"/>
        <end position="229"/>
    </location>
</feature>
<feature type="active site" description="Proton donor/acceptor" evidence="1">
    <location>
        <position position="96"/>
    </location>
</feature>
<feature type="active site" description="Schiff-base intermediate with acetaldehyde" evidence="1">
    <location>
        <position position="166"/>
    </location>
</feature>
<feature type="active site" description="Proton donor/acceptor" evidence="1">
    <location>
        <position position="195"/>
    </location>
</feature>
<keyword id="KW-0963">Cytoplasm</keyword>
<keyword id="KW-0456">Lyase</keyword>
<keyword id="KW-1185">Reference proteome</keyword>
<keyword id="KW-0704">Schiff base</keyword>
<organism>
    <name type="scientific">Micrococcus luteus (strain ATCC 4698 / DSM 20030 / JCM 1464 / CCM 169 / CCUG 5858 / IAM 1056 / NBRC 3333 / NCIMB 9278 / NCTC 2665 / VKM Ac-2230)</name>
    <name type="common">Micrococcus lysodeikticus</name>
    <dbReference type="NCBI Taxonomy" id="465515"/>
    <lineage>
        <taxon>Bacteria</taxon>
        <taxon>Bacillati</taxon>
        <taxon>Actinomycetota</taxon>
        <taxon>Actinomycetes</taxon>
        <taxon>Micrococcales</taxon>
        <taxon>Micrococcaceae</taxon>
        <taxon>Micrococcus</taxon>
    </lineage>
</organism>
<gene>
    <name evidence="1" type="primary">deoC</name>
    <name type="ordered locus">Mlut_05590</name>
</gene>
<accession>C5C9E5</accession>
<evidence type="ECO:0000255" key="1">
    <source>
        <dbReference type="HAMAP-Rule" id="MF_00114"/>
    </source>
</evidence>